<keyword id="KW-0067">ATP-binding</keyword>
<keyword id="KW-0347">Helicase</keyword>
<keyword id="KW-0378">Hydrolase</keyword>
<keyword id="KW-0547">Nucleotide-binding</keyword>
<keyword id="KW-0539">Nucleus</keyword>
<keyword id="KW-0597">Phosphoprotein</keyword>
<keyword id="KW-1185">Reference proteome</keyword>
<accession>O13799</accession>
<gene>
    <name type="ORF">SPAC17H9.02</name>
</gene>
<sequence>MSENSTDSKNFQFSEGSRESSNDELKVLLRDTETKEDEKSSFSNSEEESIIENLSDSSVNKEYAKNSLKLSDAVSESKYLNPLLKDKRHDRSFALHKVVVPDDYDYIPLNKHIPSDPPAKTYPFELDPFQSTAIKCVERMESVLVSAHTSAGKTVIAEYAIAQALKNRQRVIYTSPIKSLSNQKYRELLSEFGDVGLMTGDVSINPSASCLIMTTEILRAMLYKNSEIMHEIAWVIFDEVHYMRDKDRGVVWEETLILLPDAIRFIFLSATLPNALQFARWISEIHKQPCHVVYTDYRPTPLQHFIYPQGADGIYMLVDEKNKFKTENFKKVLEVLDHSTRQENYSKSSKKVKKSSSLERIINMVLSNRYDPIIVFCFSKKECEINAHQFGKLDLNDTENKELVTEIFDSAINQLSEEDRGLRQFEEMRSLLLRGIGIHHSGLLPILKELVEILFQEGLVRILFATETFSIGLNMPARTVLFTKAQKFSGNNFRWLTSGEYMQMSGRAGRRGIDTKGLSIVILDQSIDEQAARCLMNGQADVLNSAFHLSYGMILNLMRIEEISPEDILKKSFYQFQNMESLPLIKEELMQLKNEETSINIPNETAVKEFHDLKLQLEKYGEEIQKVMTHPDNCLPYLQSGRLIQIKLGGIIFPWGVLVNVIKREFDPNTREQVAPHETYVLDVLLPISSNSMSNHKVNPSILVPPRPNETPLYEIVSVLLTAVCNISSIRIYMPRELNSNESKLRAYRRVNEVIEEFKEIPYLDPLEHMHIESSTLSLSLRKLEILEPKLFDSPYYKDSKHRAEYHEFRKKLNLRAQIKDISTKITNTEAIIQLRELKIRQRVLRRLGFCTLENVIDIKGRVACEITSGDELLLVELIFQGFFNQMPPEEIAAALSCFVYEDKSEVSTLNLKEPFKKMYLTIIEAAKRIATVSLESKLQFNESDYLHQFKPDIMEPVSLWINGASFQEICIVSKLYEGSIVRTFRRLDELLKQLEHAAIVLGNNELKEKSVLTEQKLHRDIIFSASLYL</sequence>
<dbReference type="EC" id="3.6.4.-"/>
<dbReference type="EMBL" id="CU329670">
    <property type="protein sequence ID" value="CAB11211.1"/>
    <property type="molecule type" value="Genomic_DNA"/>
</dbReference>
<dbReference type="PIR" id="T37868">
    <property type="entry name" value="T37868"/>
</dbReference>
<dbReference type="SMR" id="O13799"/>
<dbReference type="BioGRID" id="278648">
    <property type="interactions" value="273"/>
</dbReference>
<dbReference type="FunCoup" id="O13799">
    <property type="interactions" value="347"/>
</dbReference>
<dbReference type="IntAct" id="O13799">
    <property type="interactions" value="13"/>
</dbReference>
<dbReference type="STRING" id="284812.O13799"/>
<dbReference type="iPTMnet" id="O13799"/>
<dbReference type="PaxDb" id="4896-SPAC17H9.02.1"/>
<dbReference type="EnsemblFungi" id="SPAC17H9.02.1">
    <property type="protein sequence ID" value="SPAC17H9.02.1:pep"/>
    <property type="gene ID" value="SPAC17H9.02"/>
</dbReference>
<dbReference type="KEGG" id="spo:2542173"/>
<dbReference type="PomBase" id="SPAC17H9.02"/>
<dbReference type="VEuPathDB" id="FungiDB:SPAC17H9.02"/>
<dbReference type="eggNOG" id="KOG0948">
    <property type="taxonomic scope" value="Eukaryota"/>
</dbReference>
<dbReference type="HOGENOM" id="CLU_002902_0_1_1"/>
<dbReference type="InParanoid" id="O13799"/>
<dbReference type="OMA" id="GADGIYM"/>
<dbReference type="PhylomeDB" id="O13799"/>
<dbReference type="PRO" id="PR:O13799"/>
<dbReference type="Proteomes" id="UP000002485">
    <property type="component" value="Chromosome I"/>
</dbReference>
<dbReference type="GO" id="GO:1990342">
    <property type="term" value="C:heterochromatin island"/>
    <property type="evidence" value="ECO:0000314"/>
    <property type="project" value="PomBase"/>
</dbReference>
<dbReference type="GO" id="GO:1990477">
    <property type="term" value="C:MTREC complex"/>
    <property type="evidence" value="ECO:0000314"/>
    <property type="project" value="PomBase"/>
</dbReference>
<dbReference type="GO" id="GO:0016604">
    <property type="term" value="C:nuclear body"/>
    <property type="evidence" value="ECO:0000314"/>
    <property type="project" value="PomBase"/>
</dbReference>
<dbReference type="GO" id="GO:0005730">
    <property type="term" value="C:nucleolus"/>
    <property type="evidence" value="ECO:0000266"/>
    <property type="project" value="PomBase"/>
</dbReference>
<dbReference type="GO" id="GO:0005634">
    <property type="term" value="C:nucleus"/>
    <property type="evidence" value="ECO:0007005"/>
    <property type="project" value="PomBase"/>
</dbReference>
<dbReference type="GO" id="GO:0005524">
    <property type="term" value="F:ATP binding"/>
    <property type="evidence" value="ECO:0007669"/>
    <property type="project" value="UniProtKB-KW"/>
</dbReference>
<dbReference type="GO" id="GO:0016887">
    <property type="term" value="F:ATP hydrolysis activity"/>
    <property type="evidence" value="ECO:0000305"/>
    <property type="project" value="PomBase"/>
</dbReference>
<dbReference type="GO" id="GO:0003723">
    <property type="term" value="F:RNA binding"/>
    <property type="evidence" value="ECO:0007669"/>
    <property type="project" value="InterPro"/>
</dbReference>
<dbReference type="GO" id="GO:0003724">
    <property type="term" value="F:RNA helicase activity"/>
    <property type="evidence" value="ECO:0000318"/>
    <property type="project" value="GO_Central"/>
</dbReference>
<dbReference type="GO" id="GO:0033621">
    <property type="term" value="P:nuclear mRNA surveillance of meiosis-specific transcripts"/>
    <property type="evidence" value="ECO:0000315"/>
    <property type="project" value="PomBase"/>
</dbReference>
<dbReference type="GO" id="GO:0071030">
    <property type="term" value="P:nuclear mRNA surveillance of spliceosomal pre-mRNA splicing"/>
    <property type="evidence" value="ECO:0000315"/>
    <property type="project" value="PomBase"/>
</dbReference>
<dbReference type="GO" id="GO:0006401">
    <property type="term" value="P:RNA catabolic process"/>
    <property type="evidence" value="ECO:0000318"/>
    <property type="project" value="GO_Central"/>
</dbReference>
<dbReference type="GO" id="GO:0006364">
    <property type="term" value="P:rRNA processing"/>
    <property type="evidence" value="ECO:0000266"/>
    <property type="project" value="PomBase"/>
</dbReference>
<dbReference type="GO" id="GO:1902794">
    <property type="term" value="P:siRNA-independent facultative heterochromatin formation"/>
    <property type="evidence" value="ECO:0000315"/>
    <property type="project" value="PomBase"/>
</dbReference>
<dbReference type="GO" id="GO:0043144">
    <property type="term" value="P:sno(s)RNA processing"/>
    <property type="evidence" value="ECO:0000315"/>
    <property type="project" value="PomBase"/>
</dbReference>
<dbReference type="CDD" id="cd18024">
    <property type="entry name" value="DEXHc_Mtr4-like"/>
    <property type="match status" value="1"/>
</dbReference>
<dbReference type="CDD" id="cd13154">
    <property type="entry name" value="KOW_Mtr4"/>
    <property type="match status" value="1"/>
</dbReference>
<dbReference type="CDD" id="cd18795">
    <property type="entry name" value="SF2_C_Ski2"/>
    <property type="match status" value="1"/>
</dbReference>
<dbReference type="FunFam" id="3.40.50.300:FF:000083">
    <property type="entry name" value="ATP-dependent RNA helicase DOB1"/>
    <property type="match status" value="1"/>
</dbReference>
<dbReference type="FunFam" id="3.40.50.300:FF:000141">
    <property type="entry name" value="ATP-dependent RNA helicase DOB1"/>
    <property type="match status" value="1"/>
</dbReference>
<dbReference type="FunFam" id="1.20.1500.20:FF:000002">
    <property type="entry name" value="DEAD/DEAH box helicase, putative"/>
    <property type="match status" value="1"/>
</dbReference>
<dbReference type="FunFam" id="2.40.30.300:FF:000005">
    <property type="entry name" value="Putative ATP-dependent RNA helicase"/>
    <property type="match status" value="1"/>
</dbReference>
<dbReference type="Gene3D" id="1.10.3380.30">
    <property type="match status" value="1"/>
</dbReference>
<dbReference type="Gene3D" id="1.20.1500.20">
    <property type="match status" value="1"/>
</dbReference>
<dbReference type="Gene3D" id="2.40.30.300">
    <property type="match status" value="1"/>
</dbReference>
<dbReference type="Gene3D" id="3.40.50.300">
    <property type="entry name" value="P-loop containing nucleotide triphosphate hydrolases"/>
    <property type="match status" value="2"/>
</dbReference>
<dbReference type="InterPro" id="IPR011545">
    <property type="entry name" value="DEAD/DEAH_box_helicase_dom"/>
</dbReference>
<dbReference type="InterPro" id="IPR014001">
    <property type="entry name" value="Helicase_ATP-bd"/>
</dbReference>
<dbReference type="InterPro" id="IPR001650">
    <property type="entry name" value="Helicase_C-like"/>
</dbReference>
<dbReference type="InterPro" id="IPR048392">
    <property type="entry name" value="MTR4-like_stalk"/>
</dbReference>
<dbReference type="InterPro" id="IPR025696">
    <property type="entry name" value="MTR4_beta-barrel"/>
</dbReference>
<dbReference type="InterPro" id="IPR027417">
    <property type="entry name" value="P-loop_NTPase"/>
</dbReference>
<dbReference type="InterPro" id="IPR050699">
    <property type="entry name" value="RNA-DNA_Helicase"/>
</dbReference>
<dbReference type="InterPro" id="IPR016438">
    <property type="entry name" value="SKI2-like"/>
</dbReference>
<dbReference type="InterPro" id="IPR012961">
    <property type="entry name" value="Ski2/MTR4_C"/>
</dbReference>
<dbReference type="PANTHER" id="PTHR12131">
    <property type="entry name" value="ATP-DEPENDENT RNA AND DNA HELICASE"/>
    <property type="match status" value="1"/>
</dbReference>
<dbReference type="PANTHER" id="PTHR12131:SF30">
    <property type="entry name" value="ATP-DEPENDENT RNA HELICASE DOB1"/>
    <property type="match status" value="1"/>
</dbReference>
<dbReference type="Pfam" id="PF00270">
    <property type="entry name" value="DEAD"/>
    <property type="match status" value="1"/>
</dbReference>
<dbReference type="Pfam" id="PF08148">
    <property type="entry name" value="DSHCT"/>
    <property type="match status" value="1"/>
</dbReference>
<dbReference type="Pfam" id="PF00271">
    <property type="entry name" value="Helicase_C"/>
    <property type="match status" value="1"/>
</dbReference>
<dbReference type="Pfam" id="PF21408">
    <property type="entry name" value="MTR4-like_stalk"/>
    <property type="match status" value="1"/>
</dbReference>
<dbReference type="Pfam" id="PF13234">
    <property type="entry name" value="MTR4_beta-barrel"/>
    <property type="match status" value="1"/>
</dbReference>
<dbReference type="PIRSF" id="PIRSF005198">
    <property type="entry name" value="Antiviral_helicase_SKI2"/>
    <property type="match status" value="1"/>
</dbReference>
<dbReference type="SMART" id="SM00487">
    <property type="entry name" value="DEXDc"/>
    <property type="match status" value="1"/>
</dbReference>
<dbReference type="SMART" id="SM01142">
    <property type="entry name" value="DSHCT"/>
    <property type="match status" value="1"/>
</dbReference>
<dbReference type="SMART" id="SM00490">
    <property type="entry name" value="HELICc"/>
    <property type="match status" value="1"/>
</dbReference>
<dbReference type="SUPFAM" id="SSF52540">
    <property type="entry name" value="P-loop containing nucleoside triphosphate hydrolases"/>
    <property type="match status" value="1"/>
</dbReference>
<dbReference type="PROSITE" id="PS51192">
    <property type="entry name" value="HELICASE_ATP_BIND_1"/>
    <property type="match status" value="1"/>
</dbReference>
<dbReference type="PROSITE" id="PS51194">
    <property type="entry name" value="HELICASE_CTER"/>
    <property type="match status" value="1"/>
</dbReference>
<feature type="chain" id="PRO_0000102099" description="Uncharacterized helicase C17H9.02">
    <location>
        <begin position="1"/>
        <end position="1030"/>
    </location>
</feature>
<feature type="domain" description="Helicase ATP-binding" evidence="1">
    <location>
        <begin position="134"/>
        <end position="290"/>
    </location>
</feature>
<feature type="domain" description="Helicase C-terminal" evidence="2">
    <location>
        <begin position="357"/>
        <end position="561"/>
    </location>
</feature>
<feature type="region of interest" description="Disordered" evidence="3">
    <location>
        <begin position="1"/>
        <end position="53"/>
    </location>
</feature>
<feature type="short sequence motif" description="DEVH box">
    <location>
        <begin position="238"/>
        <end position="241"/>
    </location>
</feature>
<feature type="compositionally biased region" description="Polar residues" evidence="3">
    <location>
        <begin position="1"/>
        <end position="15"/>
    </location>
</feature>
<feature type="compositionally biased region" description="Basic and acidic residues" evidence="3">
    <location>
        <begin position="16"/>
        <end position="40"/>
    </location>
</feature>
<feature type="binding site" evidence="1">
    <location>
        <begin position="147"/>
        <end position="154"/>
    </location>
    <ligand>
        <name>ATP</name>
        <dbReference type="ChEBI" id="CHEBI:30616"/>
    </ligand>
</feature>
<feature type="modified residue" description="Phosphoserine" evidence="5">
    <location>
        <position position="41"/>
    </location>
</feature>
<name>YE02_SCHPO</name>
<reference key="1">
    <citation type="journal article" date="2002" name="Nature">
        <title>The genome sequence of Schizosaccharomyces pombe.</title>
        <authorList>
            <person name="Wood V."/>
            <person name="Gwilliam R."/>
            <person name="Rajandream M.A."/>
            <person name="Lyne M.H."/>
            <person name="Lyne R."/>
            <person name="Stewart A."/>
            <person name="Sgouros J.G."/>
            <person name="Peat N."/>
            <person name="Hayles J."/>
            <person name="Baker S.G."/>
            <person name="Basham D."/>
            <person name="Bowman S."/>
            <person name="Brooks K."/>
            <person name="Brown D."/>
            <person name="Brown S."/>
            <person name="Chillingworth T."/>
            <person name="Churcher C.M."/>
            <person name="Collins M."/>
            <person name="Connor R."/>
            <person name="Cronin A."/>
            <person name="Davis P."/>
            <person name="Feltwell T."/>
            <person name="Fraser A."/>
            <person name="Gentles S."/>
            <person name="Goble A."/>
            <person name="Hamlin N."/>
            <person name="Harris D.E."/>
            <person name="Hidalgo J."/>
            <person name="Hodgson G."/>
            <person name="Holroyd S."/>
            <person name="Hornsby T."/>
            <person name="Howarth S."/>
            <person name="Huckle E.J."/>
            <person name="Hunt S."/>
            <person name="Jagels K."/>
            <person name="James K.D."/>
            <person name="Jones L."/>
            <person name="Jones M."/>
            <person name="Leather S."/>
            <person name="McDonald S."/>
            <person name="McLean J."/>
            <person name="Mooney P."/>
            <person name="Moule S."/>
            <person name="Mungall K.L."/>
            <person name="Murphy L.D."/>
            <person name="Niblett D."/>
            <person name="Odell C."/>
            <person name="Oliver K."/>
            <person name="O'Neil S."/>
            <person name="Pearson D."/>
            <person name="Quail M.A."/>
            <person name="Rabbinowitsch E."/>
            <person name="Rutherford K.M."/>
            <person name="Rutter S."/>
            <person name="Saunders D."/>
            <person name="Seeger K."/>
            <person name="Sharp S."/>
            <person name="Skelton J."/>
            <person name="Simmonds M.N."/>
            <person name="Squares R."/>
            <person name="Squares S."/>
            <person name="Stevens K."/>
            <person name="Taylor K."/>
            <person name="Taylor R.G."/>
            <person name="Tivey A."/>
            <person name="Walsh S.V."/>
            <person name="Warren T."/>
            <person name="Whitehead S."/>
            <person name="Woodward J.R."/>
            <person name="Volckaert G."/>
            <person name="Aert R."/>
            <person name="Robben J."/>
            <person name="Grymonprez B."/>
            <person name="Weltjens I."/>
            <person name="Vanstreels E."/>
            <person name="Rieger M."/>
            <person name="Schaefer M."/>
            <person name="Mueller-Auer S."/>
            <person name="Gabel C."/>
            <person name="Fuchs M."/>
            <person name="Duesterhoeft A."/>
            <person name="Fritzc C."/>
            <person name="Holzer E."/>
            <person name="Moestl D."/>
            <person name="Hilbert H."/>
            <person name="Borzym K."/>
            <person name="Langer I."/>
            <person name="Beck A."/>
            <person name="Lehrach H."/>
            <person name="Reinhardt R."/>
            <person name="Pohl T.M."/>
            <person name="Eger P."/>
            <person name="Zimmermann W."/>
            <person name="Wedler H."/>
            <person name="Wambutt R."/>
            <person name="Purnelle B."/>
            <person name="Goffeau A."/>
            <person name="Cadieu E."/>
            <person name="Dreano S."/>
            <person name="Gloux S."/>
            <person name="Lelaure V."/>
            <person name="Mottier S."/>
            <person name="Galibert F."/>
            <person name="Aves S.J."/>
            <person name="Xiang Z."/>
            <person name="Hunt C."/>
            <person name="Moore K."/>
            <person name="Hurst S.M."/>
            <person name="Lucas M."/>
            <person name="Rochet M."/>
            <person name="Gaillardin C."/>
            <person name="Tallada V.A."/>
            <person name="Garzon A."/>
            <person name="Thode G."/>
            <person name="Daga R.R."/>
            <person name="Cruzado L."/>
            <person name="Jimenez J."/>
            <person name="Sanchez M."/>
            <person name="del Rey F."/>
            <person name="Benito J."/>
            <person name="Dominguez A."/>
            <person name="Revuelta J.L."/>
            <person name="Moreno S."/>
            <person name="Armstrong J."/>
            <person name="Forsburg S.L."/>
            <person name="Cerutti L."/>
            <person name="Lowe T."/>
            <person name="McCombie W.R."/>
            <person name="Paulsen I."/>
            <person name="Potashkin J."/>
            <person name="Shpakovski G.V."/>
            <person name="Ussery D."/>
            <person name="Barrell B.G."/>
            <person name="Nurse P."/>
        </authorList>
    </citation>
    <scope>NUCLEOTIDE SEQUENCE [LARGE SCALE GENOMIC DNA]</scope>
    <source>
        <strain>972 / ATCC 24843</strain>
    </source>
</reference>
<reference key="2">
    <citation type="journal article" date="2006" name="Nat. Biotechnol.">
        <title>ORFeome cloning and global analysis of protein localization in the fission yeast Schizosaccharomyces pombe.</title>
        <authorList>
            <person name="Matsuyama A."/>
            <person name="Arai R."/>
            <person name="Yashiroda Y."/>
            <person name="Shirai A."/>
            <person name="Kamata A."/>
            <person name="Sekido S."/>
            <person name="Kobayashi Y."/>
            <person name="Hashimoto A."/>
            <person name="Hamamoto M."/>
            <person name="Hiraoka Y."/>
            <person name="Horinouchi S."/>
            <person name="Yoshida M."/>
        </authorList>
    </citation>
    <scope>SUBCELLULAR LOCATION [LARGE SCALE ANALYSIS]</scope>
</reference>
<reference key="3">
    <citation type="journal article" date="2008" name="J. Proteome Res.">
        <title>Phosphoproteome analysis of fission yeast.</title>
        <authorList>
            <person name="Wilson-Grady J.T."/>
            <person name="Villen J."/>
            <person name="Gygi S.P."/>
        </authorList>
    </citation>
    <scope>PHOSPHORYLATION [LARGE SCALE ANALYSIS] AT SER-41</scope>
    <scope>IDENTIFICATION BY MASS SPECTROMETRY</scope>
</reference>
<proteinExistence type="evidence at protein level"/>
<organism>
    <name type="scientific">Schizosaccharomyces pombe (strain 972 / ATCC 24843)</name>
    <name type="common">Fission yeast</name>
    <dbReference type="NCBI Taxonomy" id="284812"/>
    <lineage>
        <taxon>Eukaryota</taxon>
        <taxon>Fungi</taxon>
        <taxon>Dikarya</taxon>
        <taxon>Ascomycota</taxon>
        <taxon>Taphrinomycotina</taxon>
        <taxon>Schizosaccharomycetes</taxon>
        <taxon>Schizosaccharomycetales</taxon>
        <taxon>Schizosaccharomycetaceae</taxon>
        <taxon>Schizosaccharomyces</taxon>
    </lineage>
</organism>
<protein>
    <recommendedName>
        <fullName>Uncharacterized helicase C17H9.02</fullName>
        <ecNumber>3.6.4.-</ecNumber>
    </recommendedName>
</protein>
<evidence type="ECO:0000255" key="1">
    <source>
        <dbReference type="PROSITE-ProRule" id="PRU00541"/>
    </source>
</evidence>
<evidence type="ECO:0000255" key="2">
    <source>
        <dbReference type="PROSITE-ProRule" id="PRU00542"/>
    </source>
</evidence>
<evidence type="ECO:0000256" key="3">
    <source>
        <dbReference type="SAM" id="MobiDB-lite"/>
    </source>
</evidence>
<evidence type="ECO:0000269" key="4">
    <source>
    </source>
</evidence>
<evidence type="ECO:0000269" key="5">
    <source>
    </source>
</evidence>
<evidence type="ECO:0000305" key="6"/>
<comment type="interaction">
    <interactant intactId="EBI-8993901">
        <id>O13799</id>
    </interactant>
    <interactant intactId="EBI-7997221">
        <id>Q10295</id>
        <label>pla1</label>
    </interactant>
    <organismsDiffer>false</organismsDiffer>
    <experiments>2</experiments>
</comment>
<comment type="interaction">
    <interactant intactId="EBI-8993901">
        <id>O13799</id>
    </interactant>
    <interactant intactId="EBI-1117407">
        <id>Q9UTR8</id>
        <label>red1</label>
    </interactant>
    <organismsDiffer>false</organismsDiffer>
    <experiments>4</experiments>
</comment>
<comment type="interaction">
    <interactant intactId="EBI-8993901">
        <id>O13799</id>
    </interactant>
    <interactant intactId="EBI-9002253">
        <id>Q9P7B7</id>
        <label>SPAC140.04</label>
    </interactant>
    <organismsDiffer>false</organismsDiffer>
    <experiments>3</experiments>
</comment>
<comment type="interaction">
    <interactant intactId="EBI-8993901">
        <id>O13799</id>
    </interactant>
    <interactant intactId="EBI-9003631">
        <id>O42975</id>
        <label>SPBC20F10.05</label>
    </interactant>
    <organismsDiffer>false</organismsDiffer>
    <experiments>3</experiments>
</comment>
<comment type="subcellular location">
    <subcellularLocation>
        <location evidence="4">Nucleus</location>
    </subcellularLocation>
</comment>
<comment type="similarity">
    <text evidence="6">Belongs to the helicase family. SKI2 subfamily.</text>
</comment>